<evidence type="ECO:0000255" key="1">
    <source>
        <dbReference type="HAMAP-Rule" id="MF_00488"/>
    </source>
</evidence>
<evidence type="ECO:0000269" key="2">
    <source>
    </source>
</evidence>
<evidence type="ECO:0000269" key="3">
    <source>
    </source>
</evidence>
<evidence type="ECO:0000269" key="4">
    <source>
    </source>
</evidence>
<evidence type="ECO:0000303" key="5">
    <source>
    </source>
</evidence>
<evidence type="ECO:0000305" key="6"/>
<evidence type="ECO:0000305" key="7">
    <source>
    </source>
</evidence>
<evidence type="ECO:0000305" key="8">
    <source>
    </source>
</evidence>
<evidence type="ECO:0000305" key="9">
    <source>
    </source>
</evidence>
<evidence type="ECO:0007744" key="10">
    <source>
        <dbReference type="PDB" id="1EZ4"/>
    </source>
</evidence>
<evidence type="ECO:0007829" key="11">
    <source>
        <dbReference type="PDB" id="1EZ4"/>
    </source>
</evidence>
<feature type="initiator methionine" description="Removed" evidence="4">
    <location>
        <position position="1"/>
    </location>
</feature>
<feature type="chain" id="PRO_0000168356" description="L-lactate dehydrogenase">
    <location>
        <begin position="2"/>
        <end position="320"/>
    </location>
</feature>
<feature type="active site" description="Proton acceptor" evidence="1 7 8 10">
    <location>
        <position position="179"/>
    </location>
</feature>
<feature type="binding site" evidence="1">
    <location>
        <position position="18"/>
    </location>
    <ligand>
        <name>NAD(+)</name>
        <dbReference type="ChEBI" id="CHEBI:57540"/>
    </ligand>
</feature>
<feature type="binding site" evidence="1 2 10">
    <location>
        <position position="39"/>
    </location>
    <ligand>
        <name>NAD(+)</name>
        <dbReference type="ChEBI" id="CHEBI:57540"/>
    </ligand>
</feature>
<feature type="binding site" evidence="1 2 10">
    <location>
        <position position="44"/>
    </location>
    <ligand>
        <name>NAD(+)</name>
        <dbReference type="ChEBI" id="CHEBI:57540"/>
    </ligand>
</feature>
<feature type="binding site" evidence="1">
    <location>
        <position position="69"/>
    </location>
    <ligand>
        <name>NAD(+)</name>
        <dbReference type="ChEBI" id="CHEBI:57540"/>
    </ligand>
</feature>
<feature type="binding site" evidence="1 2 10">
    <location>
        <begin position="83"/>
        <end position="84"/>
    </location>
    <ligand>
        <name>NAD(+)</name>
        <dbReference type="ChEBI" id="CHEBI:57540"/>
    </ligand>
</feature>
<feature type="binding site" evidence="1">
    <location>
        <position position="86"/>
    </location>
    <ligand>
        <name>substrate</name>
    </ligand>
</feature>
<feature type="binding site" evidence="1">
    <location>
        <position position="92"/>
    </location>
    <ligand>
        <name>substrate</name>
    </ligand>
</feature>
<feature type="binding site" evidence="1 2 10">
    <location>
        <position position="105"/>
    </location>
    <ligand>
        <name>NAD(+)</name>
        <dbReference type="ChEBI" id="CHEBI:57540"/>
    </ligand>
</feature>
<feature type="binding site" evidence="1 2 10">
    <location>
        <begin position="122"/>
        <end position="124"/>
    </location>
    <ligand>
        <name>NAD(+)</name>
        <dbReference type="ChEBI" id="CHEBI:57540"/>
    </ligand>
</feature>
<feature type="binding site" evidence="1">
    <location>
        <begin position="124"/>
        <end position="127"/>
    </location>
    <ligand>
        <name>substrate</name>
    </ligand>
</feature>
<feature type="binding site" evidence="1 2 10">
    <location>
        <position position="147"/>
    </location>
    <ligand>
        <name>NAD(+)</name>
        <dbReference type="ChEBI" id="CHEBI:57540"/>
    </ligand>
</feature>
<feature type="binding site" evidence="1">
    <location>
        <begin position="152"/>
        <end position="155"/>
    </location>
    <ligand>
        <name>substrate</name>
    </ligand>
</feature>
<feature type="binding site" evidence="1">
    <location>
        <position position="232"/>
    </location>
    <ligand>
        <name>substrate</name>
    </ligand>
</feature>
<feature type="modified residue" description="Phosphotyrosine" evidence="1">
    <location>
        <position position="223"/>
    </location>
</feature>
<feature type="mutagenesis site" description="Shows a significant FBP-induced thermostabilization as in the cases of many allosteric LDHs, indicating the binding of fructose 1,6-bisphosphate (FBP). However, the mutant is still a non-allosteric enzyme and shows essentially the same FBP-independent catalytic activity as the wild-type." evidence="3">
    <original>D</original>
    <variation>H</variation>
    <location>
        <position position="172"/>
    </location>
</feature>
<feature type="strand" evidence="11">
    <location>
        <begin position="9"/>
        <end position="13"/>
    </location>
</feature>
<feature type="helix" evidence="11">
    <location>
        <begin position="17"/>
        <end position="29"/>
    </location>
</feature>
<feature type="strand" evidence="11">
    <location>
        <begin position="33"/>
        <end position="38"/>
    </location>
</feature>
<feature type="helix" evidence="11">
    <location>
        <begin position="42"/>
        <end position="53"/>
    </location>
</feature>
<feature type="helix" evidence="11">
    <location>
        <begin position="54"/>
        <end position="58"/>
    </location>
</feature>
<feature type="strand" evidence="11">
    <location>
        <begin position="63"/>
        <end position="66"/>
    </location>
</feature>
<feature type="helix" evidence="11">
    <location>
        <begin position="69"/>
        <end position="72"/>
    </location>
</feature>
<feature type="strand" evidence="11">
    <location>
        <begin position="76"/>
        <end position="80"/>
    </location>
</feature>
<feature type="helix" evidence="11">
    <location>
        <begin position="96"/>
        <end position="112"/>
    </location>
</feature>
<feature type="strand" evidence="11">
    <location>
        <begin position="117"/>
        <end position="121"/>
    </location>
</feature>
<feature type="strand" evidence="11">
    <location>
        <begin position="123"/>
        <end position="125"/>
    </location>
</feature>
<feature type="helix" evidence="11">
    <location>
        <begin position="126"/>
        <end position="137"/>
    </location>
</feature>
<feature type="helix" evidence="11">
    <location>
        <begin position="141"/>
        <end position="143"/>
    </location>
</feature>
<feature type="strand" evidence="11">
    <location>
        <begin position="144"/>
        <end position="146"/>
    </location>
</feature>
<feature type="helix" evidence="11">
    <location>
        <begin position="150"/>
        <end position="164"/>
    </location>
</feature>
<feature type="helix" evidence="11">
    <location>
        <begin position="168"/>
        <end position="170"/>
    </location>
</feature>
<feature type="strand" evidence="11">
    <location>
        <begin position="175"/>
        <end position="182"/>
    </location>
</feature>
<feature type="helix" evidence="11">
    <location>
        <begin position="187"/>
        <end position="189"/>
    </location>
</feature>
<feature type="helix" evidence="11">
    <location>
        <begin position="197"/>
        <end position="203"/>
    </location>
</feature>
<feature type="helix" evidence="11">
    <location>
        <begin position="208"/>
        <end position="229"/>
    </location>
</feature>
<feature type="helix" evidence="11">
    <location>
        <begin position="234"/>
        <end position="248"/>
    </location>
</feature>
<feature type="strand" evidence="11">
    <location>
        <begin position="253"/>
        <end position="263"/>
    </location>
</feature>
<feature type="helix" evidence="11">
    <location>
        <begin position="264"/>
        <end position="266"/>
    </location>
</feature>
<feature type="strand" evidence="11">
    <location>
        <begin position="268"/>
        <end position="279"/>
    </location>
</feature>
<feature type="strand" evidence="11">
    <location>
        <begin position="282"/>
        <end position="286"/>
    </location>
</feature>
<feature type="helix" evidence="11">
    <location>
        <begin position="293"/>
        <end position="317"/>
    </location>
</feature>
<accession>P56511</accession>
<accession>P26299</accession>
<name>LDH_LACPE</name>
<comment type="function">
    <text evidence="1 3">Catalyzes the conversion of lactate to pyruvate.</text>
</comment>
<comment type="catalytic activity">
    <reaction evidence="1 3">
        <text>(S)-lactate + NAD(+) = pyruvate + NADH + H(+)</text>
        <dbReference type="Rhea" id="RHEA:23444"/>
        <dbReference type="ChEBI" id="CHEBI:15361"/>
        <dbReference type="ChEBI" id="CHEBI:15378"/>
        <dbReference type="ChEBI" id="CHEBI:16651"/>
        <dbReference type="ChEBI" id="CHEBI:57540"/>
        <dbReference type="ChEBI" id="CHEBI:57945"/>
        <dbReference type="EC" id="1.1.1.27"/>
    </reaction>
</comment>
<comment type="activity regulation">
    <text evidence="2 3">The quaternary structure is constitutionally similar to the active conformation of allosteric LDHs, and the regulation is independent of the fructose 1,6-bisphosphate-binding site.</text>
</comment>
<comment type="biophysicochemical properties">
    <kinetics>
        <KM evidence="3">1.3 mM for pyruvate (at pH 5)</KM>
        <Vmax evidence="3">1650.0 umol/min/mg enzyme for pyruvate (at pH 5)</Vmax>
    </kinetics>
</comment>
<comment type="pathway">
    <text evidence="1">Fermentation; pyruvate fermentation to lactate; (S)-lactate from pyruvate: step 1/1.</text>
</comment>
<comment type="subunit">
    <text evidence="1 2 9">Homotetramer.</text>
</comment>
<comment type="subcellular location">
    <subcellularLocation>
        <location evidence="1">Cytoplasm</location>
    </subcellularLocation>
</comment>
<comment type="similarity">
    <text evidence="1 6">Belongs to the LDH/MDH superfamily. LDH family.</text>
</comment>
<comment type="caution">
    <text evidence="6">Was originally thought to originate from L.plantarum (PubMed:1425707, PubMed:1840590).</text>
</comment>
<proteinExistence type="evidence at protein level"/>
<protein>
    <recommendedName>
        <fullName evidence="1 5">L-lactate dehydrogenase</fullName>
        <shortName evidence="1 5">L-LDH</shortName>
        <ecNumber evidence="1 3">1.1.1.27</ecNumber>
    </recommendedName>
</protein>
<gene>
    <name evidence="1 5" type="primary">ldh</name>
    <name evidence="5" type="synonym">ldhL</name>
</gene>
<reference key="1">
    <citation type="journal article" date="1991" name="J. Biol. Chem.">
        <title>D-lactate dehydrogenase is a member of the D-isomer-specific 2-hydroxyacid dehydrogenase family. Cloning, sequencing, and expression in Escherichia coli of the D-lactate dehydrogenase gene of Lactobacillus plantarum.</title>
        <authorList>
            <person name="Ohta T."/>
            <person name="Taguchi H."/>
        </authorList>
    </citation>
    <scope>NUCLEOTIDE SEQUENCE [GENOMIC DNA]</scope>
    <scope>PROTEIN SEQUENCE OF 2-24</scope>
    <scope>SUBUNIT</scope>
    <source>
        <strain>ATCC 8041 / DSM 20314 / BCRC 11053 / JCM 1558 / KCTC 3120 / LMG 10755 / NBRC 106467 / NCDO 363 / NCIMB 8026 / 124-2</strain>
    </source>
</reference>
<reference key="2">
    <citation type="journal article" date="1992" name="Eur. J. Biochem.">
        <title>Unusual amino acid substitution in the anion-binding site of Lactobacillus plantarum non-allosteric L-lactate dehydrogenase.</title>
        <authorList>
            <person name="Taguchi H."/>
            <person name="Ohta T."/>
        </authorList>
    </citation>
    <scope>FUNCTION</scope>
    <scope>CATALYTIC ACTIVITY</scope>
    <scope>BIOPHYSICOCHEMICAL PROPERTIES</scope>
    <scope>MUTAGENESIS OF ASP-172</scope>
    <scope>ACTIVITY REGULATION</scope>
    <scope>ACTIVE SITE</scope>
    <source>
        <strain>ATCC 8041 / DSM 20314 / BCRC 11053 / JCM 1558 / KCTC 3120 / LMG 10755 / NBRC 106467 / NCDO 363 / NCIMB 8026 / 124-2</strain>
    </source>
</reference>
<reference key="3">
    <citation type="journal article" date="2002" name="Proteins">
        <title>Crystal structure of non-allosteric L-lactate dehydrogenase from Lactobacillus pentosus at 2.3 A resolution: specific interactions at subunit interfaces.</title>
        <authorList>
            <person name="Uchikoba H."/>
            <person name="Fushinobu S."/>
            <person name="Wakagi T."/>
            <person name="Konno M."/>
            <person name="Taguchi H."/>
            <person name="Matsuzawa H."/>
        </authorList>
    </citation>
    <scope>X-RAY CRYSTALLOGRAPHY (2.3 ANGSTROMS) IN COMPLEX WITH NAD</scope>
    <scope>ACTIVE SITE</scope>
    <scope>ACTIVITY REGULATION</scope>
    <scope>SUBUNIT</scope>
</reference>
<organism>
    <name type="scientific">Lactiplantibacillus pentosus</name>
    <name type="common">Lactobacillus pentosus</name>
    <dbReference type="NCBI Taxonomy" id="1589"/>
    <lineage>
        <taxon>Bacteria</taxon>
        <taxon>Bacillati</taxon>
        <taxon>Bacillota</taxon>
        <taxon>Bacilli</taxon>
        <taxon>Lactobacillales</taxon>
        <taxon>Lactobacillaceae</taxon>
        <taxon>Lactiplantibacillus</taxon>
    </lineage>
</organism>
<dbReference type="EC" id="1.1.1.27" evidence="1 3"/>
<dbReference type="EMBL" id="D90340">
    <property type="protein sequence ID" value="BAA14353.1"/>
    <property type="molecule type" value="Genomic_DNA"/>
</dbReference>
<dbReference type="PIR" id="B40885">
    <property type="entry name" value="B40885"/>
</dbReference>
<dbReference type="RefSeq" id="WP_050337700.1">
    <property type="nucleotide sequence ID" value="NZ_BJZC01000133.1"/>
</dbReference>
<dbReference type="PDB" id="1EZ4">
    <property type="method" value="X-ray"/>
    <property type="resolution" value="2.30 A"/>
    <property type="chains" value="A/B/C/D=3-319"/>
</dbReference>
<dbReference type="PDBsum" id="1EZ4"/>
<dbReference type="SMR" id="P56511"/>
<dbReference type="STRING" id="1589.GCA_001188985_00048"/>
<dbReference type="GeneID" id="49392872"/>
<dbReference type="OrthoDB" id="9802969at2"/>
<dbReference type="SABIO-RK" id="P56511"/>
<dbReference type="UniPathway" id="UPA00554">
    <property type="reaction ID" value="UER00611"/>
</dbReference>
<dbReference type="EvolutionaryTrace" id="P56511"/>
<dbReference type="GO" id="GO:0005737">
    <property type="term" value="C:cytoplasm"/>
    <property type="evidence" value="ECO:0007669"/>
    <property type="project" value="UniProtKB-SubCell"/>
</dbReference>
<dbReference type="GO" id="GO:0004459">
    <property type="term" value="F:L-lactate dehydrogenase activity"/>
    <property type="evidence" value="ECO:0007669"/>
    <property type="project" value="UniProtKB-UniRule"/>
</dbReference>
<dbReference type="GO" id="GO:0006096">
    <property type="term" value="P:glycolytic process"/>
    <property type="evidence" value="ECO:0007669"/>
    <property type="project" value="UniProtKB-UniRule"/>
</dbReference>
<dbReference type="GO" id="GO:0006089">
    <property type="term" value="P:lactate metabolic process"/>
    <property type="evidence" value="ECO:0007669"/>
    <property type="project" value="TreeGrafter"/>
</dbReference>
<dbReference type="CDD" id="cd05291">
    <property type="entry name" value="HicDH_like"/>
    <property type="match status" value="1"/>
</dbReference>
<dbReference type="FunFam" id="3.40.50.720:FF:000018">
    <property type="entry name" value="Malate dehydrogenase"/>
    <property type="match status" value="1"/>
</dbReference>
<dbReference type="Gene3D" id="3.90.110.10">
    <property type="entry name" value="Lactate dehydrogenase/glycoside hydrolase, family 4, C-terminal"/>
    <property type="match status" value="1"/>
</dbReference>
<dbReference type="Gene3D" id="3.40.50.720">
    <property type="entry name" value="NAD(P)-binding Rossmann-like Domain"/>
    <property type="match status" value="1"/>
</dbReference>
<dbReference type="HAMAP" id="MF_00488">
    <property type="entry name" value="Lactate_dehydrog"/>
    <property type="match status" value="1"/>
</dbReference>
<dbReference type="InterPro" id="IPR001557">
    <property type="entry name" value="L-lactate/malate_DH"/>
</dbReference>
<dbReference type="InterPro" id="IPR011304">
    <property type="entry name" value="L-lactate_DH"/>
</dbReference>
<dbReference type="InterPro" id="IPR018177">
    <property type="entry name" value="L-lactate_DH_AS"/>
</dbReference>
<dbReference type="InterPro" id="IPR022383">
    <property type="entry name" value="Lactate/malate_DH_C"/>
</dbReference>
<dbReference type="InterPro" id="IPR001236">
    <property type="entry name" value="Lactate/malate_DH_N"/>
</dbReference>
<dbReference type="InterPro" id="IPR015955">
    <property type="entry name" value="Lactate_DH/Glyco_Ohase_4_C"/>
</dbReference>
<dbReference type="InterPro" id="IPR036291">
    <property type="entry name" value="NAD(P)-bd_dom_sf"/>
</dbReference>
<dbReference type="NCBIfam" id="TIGR01771">
    <property type="entry name" value="L-LDH-NAD"/>
    <property type="match status" value="1"/>
</dbReference>
<dbReference type="NCBIfam" id="NF000824">
    <property type="entry name" value="PRK00066.1"/>
    <property type="match status" value="1"/>
</dbReference>
<dbReference type="PANTHER" id="PTHR43128">
    <property type="entry name" value="L-2-HYDROXYCARBOXYLATE DEHYDROGENASE (NAD(P)(+))"/>
    <property type="match status" value="1"/>
</dbReference>
<dbReference type="PANTHER" id="PTHR43128:SF16">
    <property type="entry name" value="L-LACTATE DEHYDROGENASE"/>
    <property type="match status" value="1"/>
</dbReference>
<dbReference type="Pfam" id="PF02866">
    <property type="entry name" value="Ldh_1_C"/>
    <property type="match status" value="1"/>
</dbReference>
<dbReference type="Pfam" id="PF00056">
    <property type="entry name" value="Ldh_1_N"/>
    <property type="match status" value="1"/>
</dbReference>
<dbReference type="PIRSF" id="PIRSF000102">
    <property type="entry name" value="Lac_mal_DH"/>
    <property type="match status" value="1"/>
</dbReference>
<dbReference type="PRINTS" id="PR00086">
    <property type="entry name" value="LLDHDRGNASE"/>
</dbReference>
<dbReference type="SUPFAM" id="SSF56327">
    <property type="entry name" value="LDH C-terminal domain-like"/>
    <property type="match status" value="1"/>
</dbReference>
<dbReference type="SUPFAM" id="SSF51735">
    <property type="entry name" value="NAD(P)-binding Rossmann-fold domains"/>
    <property type="match status" value="1"/>
</dbReference>
<dbReference type="PROSITE" id="PS00064">
    <property type="entry name" value="L_LDH"/>
    <property type="match status" value="1"/>
</dbReference>
<sequence length="320" mass="34220">MSSMPNHQKVVLVGDGAVGSSYAFAMAQQGIAEEFVIVDVVKDRTKGDALDLEDAQAFTAPKKIYSGEYSDCKDADLVVITAGAPQKPGESRLDLVNKNLNILSSIVKPVVDSGFDGIFLVAANPVDILTYATWKFSGFPKERVIGSGTSLDSSRLRVALGKQFNVDPRSVDAYIMGEHGDSEFAAYSTATIGTRPVRDVAKEQGVSDDDLAKLEDGVRNKAYDIINLKGATFYGIGTALMRISKAILRDENAVLPVGAYMDGQYGLNDIYIGTPAIIGGTGLKQIIESPLSADELKKMQDSAATLKKVLNDGLAELENK</sequence>
<keyword id="KW-0002">3D-structure</keyword>
<keyword id="KW-0963">Cytoplasm</keyword>
<keyword id="KW-0903">Direct protein sequencing</keyword>
<keyword id="KW-0520">NAD</keyword>
<keyword id="KW-0560">Oxidoreductase</keyword>
<keyword id="KW-0597">Phosphoprotein</keyword>